<reference key="1">
    <citation type="journal article" date="2007" name="J. Bacteriol.">
        <title>The complete genome sequence of Bacillus thuringiensis Al Hakam.</title>
        <authorList>
            <person name="Challacombe J.F."/>
            <person name="Altherr M.R."/>
            <person name="Xie G."/>
            <person name="Bhotika S.S."/>
            <person name="Brown N."/>
            <person name="Bruce D."/>
            <person name="Campbell C.S."/>
            <person name="Campbell M.L."/>
            <person name="Chen J."/>
            <person name="Chertkov O."/>
            <person name="Cleland C."/>
            <person name="Dimitrijevic M."/>
            <person name="Doggett N.A."/>
            <person name="Fawcett J.J."/>
            <person name="Glavina T."/>
            <person name="Goodwin L.A."/>
            <person name="Green L.D."/>
            <person name="Han C.S."/>
            <person name="Hill K.K."/>
            <person name="Hitchcock P."/>
            <person name="Jackson P.J."/>
            <person name="Keim P."/>
            <person name="Kewalramani A.R."/>
            <person name="Longmire J."/>
            <person name="Lucas S."/>
            <person name="Malfatti S."/>
            <person name="Martinez D."/>
            <person name="McMurry K."/>
            <person name="Meincke L.J."/>
            <person name="Misra M."/>
            <person name="Moseman B.L."/>
            <person name="Mundt M."/>
            <person name="Munk A.C."/>
            <person name="Okinaka R.T."/>
            <person name="Parson-Quintana B."/>
            <person name="Reilly L.P."/>
            <person name="Richardson P."/>
            <person name="Robinson D.L."/>
            <person name="Saunders E."/>
            <person name="Tapia R."/>
            <person name="Tesmer J.G."/>
            <person name="Thayer N."/>
            <person name="Thompson L.S."/>
            <person name="Tice H."/>
            <person name="Ticknor L.O."/>
            <person name="Wills P.L."/>
            <person name="Gilna P."/>
            <person name="Brettin T.S."/>
        </authorList>
    </citation>
    <scope>NUCLEOTIDE SEQUENCE [LARGE SCALE GENOMIC DNA]</scope>
    <source>
        <strain>Al Hakam</strain>
    </source>
</reference>
<organism>
    <name type="scientific">Bacillus thuringiensis (strain Al Hakam)</name>
    <dbReference type="NCBI Taxonomy" id="412694"/>
    <lineage>
        <taxon>Bacteria</taxon>
        <taxon>Bacillati</taxon>
        <taxon>Bacillota</taxon>
        <taxon>Bacilli</taxon>
        <taxon>Bacillales</taxon>
        <taxon>Bacillaceae</taxon>
        <taxon>Bacillus</taxon>
        <taxon>Bacillus cereus group</taxon>
    </lineage>
</organism>
<gene>
    <name type="ordered locus">BALH_3551</name>
</gene>
<keyword id="KW-0012">Acyltransferase</keyword>
<keyword id="KW-0808">Transferase</keyword>
<sequence>MGFPKVERLLINYKTLDEFKKFKGCGAQELSMLEELQANIIENDSESPFYGIYYGGSLIARMSLYMKRNGGEPFEITGTYLELYKLEVLPNFQKQGFGEMLVNYAKGLQFPIKTIARIHSAGFWDKLNFQPVSVPDGDFYVWHPEVNLNTVTNEESA</sequence>
<name>Y3551_BACAH</name>
<proteinExistence type="inferred from homology"/>
<dbReference type="EC" id="2.3.1.-" evidence="1"/>
<dbReference type="EMBL" id="CP000485">
    <property type="protein sequence ID" value="ABK86785.1"/>
    <property type="molecule type" value="Genomic_DNA"/>
</dbReference>
<dbReference type="RefSeq" id="WP_000506702.1">
    <property type="nucleotide sequence ID" value="NC_008600.1"/>
</dbReference>
<dbReference type="SMR" id="A0RHU2"/>
<dbReference type="KEGG" id="btl:BALH_3551"/>
<dbReference type="HOGENOM" id="CLU_136634_0_0_9"/>
<dbReference type="GO" id="GO:0016747">
    <property type="term" value="F:acyltransferase activity, transferring groups other than amino-acyl groups"/>
    <property type="evidence" value="ECO:0007669"/>
    <property type="project" value="UniProtKB-UniRule"/>
</dbReference>
<dbReference type="CDD" id="cd04301">
    <property type="entry name" value="NAT_SF"/>
    <property type="match status" value="1"/>
</dbReference>
<dbReference type="Gene3D" id="3.40.630.30">
    <property type="match status" value="1"/>
</dbReference>
<dbReference type="HAMAP" id="MF_00824">
    <property type="entry name" value="Acetyltransf_YlbP"/>
    <property type="match status" value="1"/>
</dbReference>
<dbReference type="InterPro" id="IPR016181">
    <property type="entry name" value="Acyl_CoA_acyltransferase"/>
</dbReference>
<dbReference type="InterPro" id="IPR000182">
    <property type="entry name" value="GNAT_dom"/>
</dbReference>
<dbReference type="InterPro" id="IPR017274">
    <property type="entry name" value="YlbP"/>
</dbReference>
<dbReference type="NCBIfam" id="NF010241">
    <property type="entry name" value="PRK13688.1"/>
    <property type="match status" value="1"/>
</dbReference>
<dbReference type="Pfam" id="PF00583">
    <property type="entry name" value="Acetyltransf_1"/>
    <property type="match status" value="1"/>
</dbReference>
<dbReference type="PIRSF" id="PIRSF037732">
    <property type="entry name" value="YlbP_prd"/>
    <property type="match status" value="1"/>
</dbReference>
<dbReference type="SUPFAM" id="SSF55729">
    <property type="entry name" value="Acyl-CoA N-acyltransferases (Nat)"/>
    <property type="match status" value="1"/>
</dbReference>
<feature type="chain" id="PRO_1000083941" description="Uncharacterized N-acetyltransferase BALH_3551">
    <location>
        <begin position="1"/>
        <end position="157"/>
    </location>
</feature>
<feature type="domain" description="N-acetyltransferase" evidence="1">
    <location>
        <begin position="9"/>
        <end position="147"/>
    </location>
</feature>
<protein>
    <recommendedName>
        <fullName evidence="1">Uncharacterized N-acetyltransferase BALH_3551</fullName>
        <ecNumber evidence="1">2.3.1.-</ecNumber>
    </recommendedName>
</protein>
<evidence type="ECO:0000255" key="1">
    <source>
        <dbReference type="HAMAP-Rule" id="MF_00824"/>
    </source>
</evidence>
<accession>A0RHU2</accession>